<comment type="function">
    <text evidence="1">Catalyzes the hydrolysis of glutamine to glutamate and ammonia as part of the biosynthesis of pyridoxal 5'-phosphate. The resulting ammonia molecule is channeled to the active site of PdxS.</text>
</comment>
<comment type="catalytic activity">
    <reaction evidence="1">
        <text>aldehydo-D-ribose 5-phosphate + D-glyceraldehyde 3-phosphate + L-glutamine = pyridoxal 5'-phosphate + L-glutamate + phosphate + 3 H2O + H(+)</text>
        <dbReference type="Rhea" id="RHEA:31507"/>
        <dbReference type="ChEBI" id="CHEBI:15377"/>
        <dbReference type="ChEBI" id="CHEBI:15378"/>
        <dbReference type="ChEBI" id="CHEBI:29985"/>
        <dbReference type="ChEBI" id="CHEBI:43474"/>
        <dbReference type="ChEBI" id="CHEBI:58273"/>
        <dbReference type="ChEBI" id="CHEBI:58359"/>
        <dbReference type="ChEBI" id="CHEBI:59776"/>
        <dbReference type="ChEBI" id="CHEBI:597326"/>
        <dbReference type="EC" id="4.3.3.6"/>
    </reaction>
</comment>
<comment type="catalytic activity">
    <reaction evidence="1">
        <text>L-glutamine + H2O = L-glutamate + NH4(+)</text>
        <dbReference type="Rhea" id="RHEA:15889"/>
        <dbReference type="ChEBI" id="CHEBI:15377"/>
        <dbReference type="ChEBI" id="CHEBI:28938"/>
        <dbReference type="ChEBI" id="CHEBI:29985"/>
        <dbReference type="ChEBI" id="CHEBI:58359"/>
        <dbReference type="EC" id="3.5.1.2"/>
    </reaction>
</comment>
<comment type="pathway">
    <text evidence="1">Cofactor biosynthesis; pyridoxal 5'-phosphate biosynthesis.</text>
</comment>
<comment type="subunit">
    <text evidence="1">In the presence of PdxS, forms a dodecamer of heterodimers. Only shows activity in the heterodimer.</text>
</comment>
<comment type="similarity">
    <text evidence="1">Belongs to the glutaminase PdxT/SNO family.</text>
</comment>
<reference key="1">
    <citation type="journal article" date="2011" name="BMC Genomics">
        <title>Complete genome sequence of the filamentous anoxygenic phototrophic bacterium Chloroflexus aurantiacus.</title>
        <authorList>
            <person name="Tang K.H."/>
            <person name="Barry K."/>
            <person name="Chertkov O."/>
            <person name="Dalin E."/>
            <person name="Han C.S."/>
            <person name="Hauser L.J."/>
            <person name="Honchak B.M."/>
            <person name="Karbach L.E."/>
            <person name="Land M.L."/>
            <person name="Lapidus A."/>
            <person name="Larimer F.W."/>
            <person name="Mikhailova N."/>
            <person name="Pitluck S."/>
            <person name="Pierson B.K."/>
            <person name="Blankenship R.E."/>
        </authorList>
    </citation>
    <scope>NUCLEOTIDE SEQUENCE [LARGE SCALE GENOMIC DNA]</scope>
    <source>
        <strain>ATCC 29366 / DSM 635 / J-10-fl</strain>
    </source>
</reference>
<proteinExistence type="inferred from homology"/>
<organism>
    <name type="scientific">Chloroflexus aurantiacus (strain ATCC 29366 / DSM 635 / J-10-fl)</name>
    <dbReference type="NCBI Taxonomy" id="324602"/>
    <lineage>
        <taxon>Bacteria</taxon>
        <taxon>Bacillati</taxon>
        <taxon>Chloroflexota</taxon>
        <taxon>Chloroflexia</taxon>
        <taxon>Chloroflexales</taxon>
        <taxon>Chloroflexineae</taxon>
        <taxon>Chloroflexaceae</taxon>
        <taxon>Chloroflexus</taxon>
    </lineage>
</organism>
<feature type="chain" id="PRO_1000088046" description="Pyridoxal 5'-phosphate synthase subunit PdxT">
    <location>
        <begin position="1"/>
        <end position="190"/>
    </location>
</feature>
<feature type="active site" description="Nucleophile" evidence="1">
    <location>
        <position position="78"/>
    </location>
</feature>
<feature type="active site" description="Charge relay system" evidence="1">
    <location>
        <position position="174"/>
    </location>
</feature>
<feature type="active site" description="Charge relay system" evidence="1">
    <location>
        <position position="176"/>
    </location>
</feature>
<feature type="binding site" evidence="1">
    <location>
        <begin position="46"/>
        <end position="48"/>
    </location>
    <ligand>
        <name>L-glutamine</name>
        <dbReference type="ChEBI" id="CHEBI:58359"/>
    </ligand>
</feature>
<feature type="binding site" evidence="1">
    <location>
        <position position="108"/>
    </location>
    <ligand>
        <name>L-glutamine</name>
        <dbReference type="ChEBI" id="CHEBI:58359"/>
    </ligand>
</feature>
<feature type="binding site" evidence="1">
    <location>
        <begin position="137"/>
        <end position="138"/>
    </location>
    <ligand>
        <name>L-glutamine</name>
        <dbReference type="ChEBI" id="CHEBI:58359"/>
    </ligand>
</feature>
<accession>A9WFU0</accession>
<keyword id="KW-0315">Glutamine amidotransferase</keyword>
<keyword id="KW-0378">Hydrolase</keyword>
<keyword id="KW-0456">Lyase</keyword>
<keyword id="KW-0663">Pyridoxal phosphate</keyword>
<keyword id="KW-1185">Reference proteome</keyword>
<evidence type="ECO:0000255" key="1">
    <source>
        <dbReference type="HAMAP-Rule" id="MF_01615"/>
    </source>
</evidence>
<dbReference type="EC" id="4.3.3.6" evidence="1"/>
<dbReference type="EC" id="3.5.1.2" evidence="1"/>
<dbReference type="EMBL" id="CP000909">
    <property type="protein sequence ID" value="ABY35440.1"/>
    <property type="molecule type" value="Genomic_DNA"/>
</dbReference>
<dbReference type="RefSeq" id="WP_012258094.1">
    <property type="nucleotide sequence ID" value="NC_010175.1"/>
</dbReference>
<dbReference type="RefSeq" id="YP_001635829.1">
    <property type="nucleotide sequence ID" value="NC_010175.1"/>
</dbReference>
<dbReference type="SMR" id="A9WFU0"/>
<dbReference type="FunCoup" id="A9WFU0">
    <property type="interactions" value="227"/>
</dbReference>
<dbReference type="STRING" id="324602.Caur_2231"/>
<dbReference type="MEROPS" id="C26.A32"/>
<dbReference type="EnsemblBacteria" id="ABY35440">
    <property type="protein sequence ID" value="ABY35440"/>
    <property type="gene ID" value="Caur_2231"/>
</dbReference>
<dbReference type="KEGG" id="cau:Caur_2231"/>
<dbReference type="PATRIC" id="fig|324602.8.peg.2528"/>
<dbReference type="eggNOG" id="COG0311">
    <property type="taxonomic scope" value="Bacteria"/>
</dbReference>
<dbReference type="HOGENOM" id="CLU_069674_2_0_0"/>
<dbReference type="InParanoid" id="A9WFU0"/>
<dbReference type="UniPathway" id="UPA00245"/>
<dbReference type="Proteomes" id="UP000002008">
    <property type="component" value="Chromosome"/>
</dbReference>
<dbReference type="GO" id="GO:0005829">
    <property type="term" value="C:cytosol"/>
    <property type="evidence" value="ECO:0000318"/>
    <property type="project" value="GO_Central"/>
</dbReference>
<dbReference type="GO" id="GO:1903600">
    <property type="term" value="C:glutaminase complex"/>
    <property type="evidence" value="ECO:0000318"/>
    <property type="project" value="GO_Central"/>
</dbReference>
<dbReference type="GO" id="GO:0004359">
    <property type="term" value="F:glutaminase activity"/>
    <property type="evidence" value="ECO:0007669"/>
    <property type="project" value="UniProtKB-UniRule"/>
</dbReference>
<dbReference type="GO" id="GO:0036381">
    <property type="term" value="F:pyridoxal 5'-phosphate synthase (glutamine hydrolysing) activity"/>
    <property type="evidence" value="ECO:0007669"/>
    <property type="project" value="UniProtKB-UniRule"/>
</dbReference>
<dbReference type="GO" id="GO:0006543">
    <property type="term" value="P:glutamine catabolic process"/>
    <property type="evidence" value="ECO:0007669"/>
    <property type="project" value="UniProtKB-UniRule"/>
</dbReference>
<dbReference type="GO" id="GO:0042823">
    <property type="term" value="P:pyridoxal phosphate biosynthetic process"/>
    <property type="evidence" value="ECO:0000318"/>
    <property type="project" value="GO_Central"/>
</dbReference>
<dbReference type="GO" id="GO:0008614">
    <property type="term" value="P:pyridoxine metabolic process"/>
    <property type="evidence" value="ECO:0000318"/>
    <property type="project" value="GO_Central"/>
</dbReference>
<dbReference type="CDD" id="cd01749">
    <property type="entry name" value="GATase1_PB"/>
    <property type="match status" value="1"/>
</dbReference>
<dbReference type="FunFam" id="3.40.50.880:FF:000041">
    <property type="entry name" value="Glutamine amidotransferase subunit pdxT, putative"/>
    <property type="match status" value="1"/>
</dbReference>
<dbReference type="Gene3D" id="3.40.50.880">
    <property type="match status" value="1"/>
</dbReference>
<dbReference type="HAMAP" id="MF_01615">
    <property type="entry name" value="PdxT"/>
    <property type="match status" value="1"/>
</dbReference>
<dbReference type="InterPro" id="IPR029062">
    <property type="entry name" value="Class_I_gatase-like"/>
</dbReference>
<dbReference type="InterPro" id="IPR002161">
    <property type="entry name" value="PdxT/SNO"/>
</dbReference>
<dbReference type="InterPro" id="IPR021196">
    <property type="entry name" value="PdxT/SNO_CS"/>
</dbReference>
<dbReference type="NCBIfam" id="TIGR03800">
    <property type="entry name" value="PLP_synth_Pdx2"/>
    <property type="match status" value="1"/>
</dbReference>
<dbReference type="PANTHER" id="PTHR31559">
    <property type="entry name" value="PYRIDOXAL 5'-PHOSPHATE SYNTHASE SUBUNIT SNO"/>
    <property type="match status" value="1"/>
</dbReference>
<dbReference type="PANTHER" id="PTHR31559:SF0">
    <property type="entry name" value="PYRIDOXAL 5'-PHOSPHATE SYNTHASE SUBUNIT SNO1-RELATED"/>
    <property type="match status" value="1"/>
</dbReference>
<dbReference type="Pfam" id="PF01174">
    <property type="entry name" value="SNO"/>
    <property type="match status" value="1"/>
</dbReference>
<dbReference type="PIRSF" id="PIRSF005639">
    <property type="entry name" value="Glut_amidoT_SNO"/>
    <property type="match status" value="1"/>
</dbReference>
<dbReference type="SUPFAM" id="SSF52317">
    <property type="entry name" value="Class I glutamine amidotransferase-like"/>
    <property type="match status" value="1"/>
</dbReference>
<dbReference type="PROSITE" id="PS01236">
    <property type="entry name" value="PDXT_SNO_1"/>
    <property type="match status" value="1"/>
</dbReference>
<dbReference type="PROSITE" id="PS51130">
    <property type="entry name" value="PDXT_SNO_2"/>
    <property type="match status" value="1"/>
</dbReference>
<name>PDXT_CHLAA</name>
<sequence>MTVGVLALQGDFREHCAVLRRIGVEPIEVRLPRQLEQVERLIIPGGESTTIGRLLTIYQMLEPIRARAGRDLAIWGTCAGAILLASVVTDQKQGGQPTLSLMNLTIQRNAYGSQLDSFEAPITMPIIGEKPLQGVFIRAPRIISVGSGCEAVGWLEDGSVVAARQGRLLATTFHPELTDDDRVHRLFLEL</sequence>
<gene>
    <name evidence="1" type="primary">pdxT</name>
    <name type="ordered locus">Caur_2231</name>
</gene>
<protein>
    <recommendedName>
        <fullName evidence="1">Pyridoxal 5'-phosphate synthase subunit PdxT</fullName>
        <ecNumber evidence="1">4.3.3.6</ecNumber>
    </recommendedName>
    <alternativeName>
        <fullName evidence="1">Pdx2</fullName>
    </alternativeName>
    <alternativeName>
        <fullName evidence="1">Pyridoxal 5'-phosphate synthase glutaminase subunit</fullName>
        <ecNumber evidence="1">3.5.1.2</ecNumber>
    </alternativeName>
</protein>